<accession>Q66J97</accession>
<proteinExistence type="evidence at transcript level"/>
<reference key="1">
    <citation type="submission" date="2004-08" db="EMBL/GenBank/DDBJ databases">
        <authorList>
            <consortium name="NIH - Xenopus Gene Collection (XGC) project"/>
        </authorList>
    </citation>
    <scope>NUCLEOTIDE SEQUENCE [LARGE SCALE MRNA]</scope>
    <source>
        <tissue>Embryo</tissue>
    </source>
</reference>
<protein>
    <recommendedName>
        <fullName>E3 ubiquitin-protein ligase arkadia-C</fullName>
        <ecNumber>2.3.2.27</ecNumber>
    </recommendedName>
    <alternativeName>
        <fullName>RING finger protein 111-C</fullName>
    </alternativeName>
    <alternativeName>
        <fullName evidence="6">RING-type E3 ubiquitin transferase arkadia-C</fullName>
    </alternativeName>
</protein>
<evidence type="ECO:0000250" key="1">
    <source>
        <dbReference type="UniProtKB" id="Q6ZNA4"/>
    </source>
</evidence>
<evidence type="ECO:0000250" key="2">
    <source>
        <dbReference type="UniProtKB" id="Q6ZSG1"/>
    </source>
</evidence>
<evidence type="ECO:0000250" key="3">
    <source>
        <dbReference type="UniProtKB" id="Q99ML9"/>
    </source>
</evidence>
<evidence type="ECO:0000255" key="4">
    <source>
        <dbReference type="PROSITE-ProRule" id="PRU00175"/>
    </source>
</evidence>
<evidence type="ECO:0000256" key="5">
    <source>
        <dbReference type="SAM" id="MobiDB-lite"/>
    </source>
</evidence>
<evidence type="ECO:0000305" key="6"/>
<name>R111C_XENLA</name>
<dbReference type="EC" id="2.3.2.27"/>
<dbReference type="EMBL" id="BC081009">
    <property type="protein sequence ID" value="AAH81009.1"/>
    <property type="molecule type" value="mRNA"/>
</dbReference>
<dbReference type="SMR" id="Q66J97"/>
<dbReference type="DNASU" id="447448"/>
<dbReference type="GeneID" id="447448"/>
<dbReference type="KEGG" id="xla:447448"/>
<dbReference type="AGR" id="Xenbase:XB-GENE-854138"/>
<dbReference type="CTD" id="447448"/>
<dbReference type="Xenbase" id="XB-GENE-854138">
    <property type="gene designation" value="rnf111.L"/>
</dbReference>
<dbReference type="OrthoDB" id="8062037at2759"/>
<dbReference type="UniPathway" id="UPA00143"/>
<dbReference type="Proteomes" id="UP000186698">
    <property type="component" value="Chromosome 3L"/>
</dbReference>
<dbReference type="Bgee" id="447448">
    <property type="expression patterns" value="Expressed in neurula embryo and 19 other cell types or tissues"/>
</dbReference>
<dbReference type="GO" id="GO:0005737">
    <property type="term" value="C:cytoplasm"/>
    <property type="evidence" value="ECO:0000318"/>
    <property type="project" value="GO_Central"/>
</dbReference>
<dbReference type="GO" id="GO:0005634">
    <property type="term" value="C:nucleus"/>
    <property type="evidence" value="ECO:0000318"/>
    <property type="project" value="GO_Central"/>
</dbReference>
<dbReference type="GO" id="GO:0016605">
    <property type="term" value="C:PML body"/>
    <property type="evidence" value="ECO:0007669"/>
    <property type="project" value="UniProtKB-SubCell"/>
</dbReference>
<dbReference type="GO" id="GO:0046332">
    <property type="term" value="F:SMAD binding"/>
    <property type="evidence" value="ECO:0000318"/>
    <property type="project" value="GO_Central"/>
</dbReference>
<dbReference type="GO" id="GO:0032184">
    <property type="term" value="F:SUMO polymer binding"/>
    <property type="evidence" value="ECO:0000318"/>
    <property type="project" value="GO_Central"/>
</dbReference>
<dbReference type="GO" id="GO:0061630">
    <property type="term" value="F:ubiquitin protein ligase activity"/>
    <property type="evidence" value="ECO:0000318"/>
    <property type="project" value="GO_Central"/>
</dbReference>
<dbReference type="GO" id="GO:0008270">
    <property type="term" value="F:zinc ion binding"/>
    <property type="evidence" value="ECO:0007669"/>
    <property type="project" value="UniProtKB-KW"/>
</dbReference>
<dbReference type="GO" id="GO:0006281">
    <property type="term" value="P:DNA repair"/>
    <property type="evidence" value="ECO:0007669"/>
    <property type="project" value="UniProtKB-KW"/>
</dbReference>
<dbReference type="GO" id="GO:0030511">
    <property type="term" value="P:positive regulation of transforming growth factor beta receptor signaling pathway"/>
    <property type="evidence" value="ECO:0000318"/>
    <property type="project" value="GO_Central"/>
</dbReference>
<dbReference type="GO" id="GO:0016567">
    <property type="term" value="P:protein ubiquitination"/>
    <property type="evidence" value="ECO:0007669"/>
    <property type="project" value="UniProtKB-UniPathway"/>
</dbReference>
<dbReference type="GO" id="GO:0006511">
    <property type="term" value="P:ubiquitin-dependent protein catabolic process"/>
    <property type="evidence" value="ECO:0000318"/>
    <property type="project" value="GO_Central"/>
</dbReference>
<dbReference type="CDD" id="cd16681">
    <property type="entry name" value="RING-H2_RNF111"/>
    <property type="match status" value="1"/>
</dbReference>
<dbReference type="FunFam" id="3.30.40.10:FF:000058">
    <property type="entry name" value="E3 ubiquitin-protein ligase Arkadia isoform X4"/>
    <property type="match status" value="1"/>
</dbReference>
<dbReference type="Gene3D" id="3.30.40.10">
    <property type="entry name" value="Zinc/RING finger domain, C3HC4 (zinc finger)"/>
    <property type="match status" value="1"/>
</dbReference>
<dbReference type="InterPro" id="IPR029306">
    <property type="entry name" value="RNF111_N"/>
</dbReference>
<dbReference type="InterPro" id="IPR001841">
    <property type="entry name" value="Znf_RING"/>
</dbReference>
<dbReference type="InterPro" id="IPR013083">
    <property type="entry name" value="Znf_RING/FYVE/PHD"/>
</dbReference>
<dbReference type="InterPro" id="IPR051073">
    <property type="entry name" value="ZNRF3_Arkadia_E3_ligases"/>
</dbReference>
<dbReference type="PANTHER" id="PTHR16200">
    <property type="entry name" value="RING ZINC FINGER"/>
    <property type="match status" value="1"/>
</dbReference>
<dbReference type="Pfam" id="PF15303">
    <property type="entry name" value="RNF111_N"/>
    <property type="match status" value="1"/>
</dbReference>
<dbReference type="Pfam" id="PF13639">
    <property type="entry name" value="zf-RING_2"/>
    <property type="match status" value="1"/>
</dbReference>
<dbReference type="SMART" id="SM00184">
    <property type="entry name" value="RING"/>
    <property type="match status" value="1"/>
</dbReference>
<dbReference type="SUPFAM" id="SSF57850">
    <property type="entry name" value="RING/U-box"/>
    <property type="match status" value="1"/>
</dbReference>
<dbReference type="PROSITE" id="PS50089">
    <property type="entry name" value="ZF_RING_2"/>
    <property type="match status" value="1"/>
</dbReference>
<organism>
    <name type="scientific">Xenopus laevis</name>
    <name type="common">African clawed frog</name>
    <dbReference type="NCBI Taxonomy" id="8355"/>
    <lineage>
        <taxon>Eukaryota</taxon>
        <taxon>Metazoa</taxon>
        <taxon>Chordata</taxon>
        <taxon>Craniata</taxon>
        <taxon>Vertebrata</taxon>
        <taxon>Euteleostomi</taxon>
        <taxon>Amphibia</taxon>
        <taxon>Batrachia</taxon>
        <taxon>Anura</taxon>
        <taxon>Pipoidea</taxon>
        <taxon>Pipidae</taxon>
        <taxon>Xenopodinae</taxon>
        <taxon>Xenopus</taxon>
        <taxon>Xenopus</taxon>
    </lineage>
</organism>
<keyword id="KW-0963">Cytoplasm</keyword>
<keyword id="KW-0217">Developmental protein</keyword>
<keyword id="KW-0227">DNA damage</keyword>
<keyword id="KW-0234">DNA repair</keyword>
<keyword id="KW-1017">Isopeptide bond</keyword>
<keyword id="KW-0479">Metal-binding</keyword>
<keyword id="KW-0539">Nucleus</keyword>
<keyword id="KW-1185">Reference proteome</keyword>
<keyword id="KW-0808">Transferase</keyword>
<keyword id="KW-0833">Ubl conjugation pathway</keyword>
<keyword id="KW-0862">Zinc</keyword>
<keyword id="KW-0863">Zinc-finger</keyword>
<gene>
    <name type="primary">rnf111-c</name>
</gene>
<feature type="chain" id="PRO_0000280695" description="E3 ubiquitin-protein ligase arkadia-C">
    <location>
        <begin position="1"/>
        <end position="967"/>
    </location>
</feature>
<feature type="zinc finger region" description="RING-type; atypical" evidence="4">
    <location>
        <begin position="915"/>
        <end position="956"/>
    </location>
</feature>
<feature type="region of interest" description="Disordered" evidence="5">
    <location>
        <begin position="57"/>
        <end position="175"/>
    </location>
</feature>
<feature type="region of interest" description="Disordered" evidence="5">
    <location>
        <begin position="193"/>
        <end position="276"/>
    </location>
</feature>
<feature type="region of interest" description="Disordered" evidence="5">
    <location>
        <begin position="321"/>
        <end position="343"/>
    </location>
</feature>
<feature type="region of interest" description="Disordered" evidence="5">
    <location>
        <begin position="368"/>
        <end position="452"/>
    </location>
</feature>
<feature type="region of interest" description="Disordered" evidence="5">
    <location>
        <begin position="482"/>
        <end position="548"/>
    </location>
</feature>
<feature type="region of interest" description="Disordered" evidence="5">
    <location>
        <begin position="629"/>
        <end position="657"/>
    </location>
</feature>
<feature type="region of interest" description="Disordered" evidence="5">
    <location>
        <begin position="669"/>
        <end position="689"/>
    </location>
</feature>
<feature type="region of interest" description="Ubiquitin binding" evidence="2">
    <location>
        <begin position="880"/>
        <end position="882"/>
    </location>
</feature>
<feature type="region of interest" description="Ubiquitin binding" evidence="2">
    <location>
        <begin position="930"/>
        <end position="934"/>
    </location>
</feature>
<feature type="short sequence motif" description="SUMO interaction motif 1 (SIM)" evidence="1">
    <location>
        <begin position="280"/>
        <end position="284"/>
    </location>
</feature>
<feature type="short sequence motif" description="SUMO interaction motif 2 (SIM)" evidence="1">
    <location>
        <begin position="305"/>
        <end position="311"/>
    </location>
</feature>
<feature type="short sequence motif" description="SUMO interaction motif 3 (SIM)" evidence="1">
    <location>
        <begin position="360"/>
        <end position="364"/>
    </location>
</feature>
<feature type="compositionally biased region" description="Low complexity" evidence="5">
    <location>
        <begin position="112"/>
        <end position="131"/>
    </location>
</feature>
<feature type="compositionally biased region" description="Polar residues" evidence="5">
    <location>
        <begin position="149"/>
        <end position="160"/>
    </location>
</feature>
<feature type="compositionally biased region" description="Low complexity" evidence="5">
    <location>
        <begin position="232"/>
        <end position="251"/>
    </location>
</feature>
<feature type="compositionally biased region" description="Low complexity" evidence="5">
    <location>
        <begin position="385"/>
        <end position="395"/>
    </location>
</feature>
<feature type="compositionally biased region" description="Basic residues" evidence="5">
    <location>
        <begin position="482"/>
        <end position="498"/>
    </location>
</feature>
<feature type="compositionally biased region" description="Polar residues" evidence="5">
    <location>
        <begin position="629"/>
        <end position="642"/>
    </location>
</feature>
<feature type="compositionally biased region" description="Pro residues" evidence="5">
    <location>
        <begin position="643"/>
        <end position="654"/>
    </location>
</feature>
<feature type="binding site" evidence="2">
    <location>
        <position position="915"/>
    </location>
    <ligand>
        <name>Zn(2+)</name>
        <dbReference type="ChEBI" id="CHEBI:29105"/>
    </ligand>
</feature>
<feature type="binding site" evidence="2">
    <location>
        <position position="918"/>
    </location>
    <ligand>
        <name>Zn(2+)</name>
        <dbReference type="ChEBI" id="CHEBI:29105"/>
    </ligand>
</feature>
<feature type="binding site" evidence="2">
    <location>
        <position position="938"/>
    </location>
    <ligand>
        <name>Zn(2+)</name>
        <dbReference type="ChEBI" id="CHEBI:29105"/>
    </ligand>
</feature>
<feature type="binding site" evidence="2">
    <location>
        <position position="941"/>
    </location>
    <ligand>
        <name>Zn(2+)</name>
        <dbReference type="ChEBI" id="CHEBI:29105"/>
    </ligand>
</feature>
<comment type="function">
    <text evidence="1 3">E3 ubiquitin-protein ligase required for mesoderm patterning during embryonic development (By similarity). Acts as an enhancer of the transcriptional responses of the smad2/smad3 effectors, which are activated downstream of BMP. Acts by mediating ubiquitination and degradation of SMAD inhibitors such as smad7, inducing their proteasomal degradation and thereby enhancing the transcriptional activity of TGF-beta and BMP. Specifically binds polysumoylated chains via SUMO interaction motifs (SIMs) and mediates ubiquitination of sumoylated substrates (By similarity). The regulation of the BMP-SMAD signaling is however independent of sumoylation and is not dependent of SUMO interaction motifs (SIMs) (By similarity).</text>
</comment>
<comment type="catalytic activity">
    <reaction evidence="1">
        <text>S-ubiquitinyl-[E2 ubiquitin-conjugating enzyme]-L-cysteine + [acceptor protein]-L-lysine = [E2 ubiquitin-conjugating enzyme]-L-cysteine + N(6)-ubiquitinyl-[acceptor protein]-L-lysine.</text>
        <dbReference type="EC" id="2.3.2.27"/>
    </reaction>
</comment>
<comment type="activity regulation">
    <text evidence="2">Binds free ubiquitin non-covalently via its RING-type zinc finger. Ubiquitin-binding leads to enhance the E3 ubiquitin-protein ligase activity by stabilizing the ubiquitin-conjugating enzyme E2 (donor ubiquitin) in the 'closed' conformation and activating ubiquitin transfer.</text>
</comment>
<comment type="pathway">
    <text evidence="1">Protein modification; protein ubiquitination.</text>
</comment>
<comment type="subunit">
    <text evidence="1 3">Monomer.</text>
</comment>
<comment type="subcellular location">
    <subcellularLocation>
        <location evidence="1">Nucleus</location>
    </subcellularLocation>
    <subcellularLocation>
        <location evidence="1">Cytoplasm</location>
    </subcellularLocation>
    <subcellularLocation>
        <location evidence="3">Nucleus</location>
        <location evidence="3">PML body</location>
    </subcellularLocation>
    <text evidence="1">Upon TGF-beta treatment, translocates from nucleus to cytosol.</text>
</comment>
<comment type="domain">
    <text evidence="1">The SUMO interaction motifs (SIMs) mediates the binding to polysumoylated substrate.</text>
</comment>
<comment type="domain">
    <text evidence="1 2">The RING-type zinc finger mediates the E3 ubiquitin-protein ligase activity and binds directly to free ubiquitin (By similarity). Non-covalent ubiquitin-binding stabilizes the ubiquitin-conjugating enzyme E2 (donor ubiquitin) in the 'closed' conformation and stimulates ubiquitin transfer (By similarity).</text>
</comment>
<comment type="similarity">
    <text evidence="6">Belongs to the Arkadia family.</text>
</comment>
<sequence>MKSEVSSDAPKRQENLKGVLLNPEAIGASKSFPGEVEMITSKVSNEFSHLCSDTNKQQIDLNSDGTEQEKNLVVHKKRKSQQAGTSYAQSCEVKENQRLLRLQPQSDEDNDSSFSDCISSPSSSSHFGDSDTMTSDEDKDNPRRYSPAGINSTPRTQSARAQKWPRPHTDSVSSLVMKRPCYQVSSLRRPLHRKRFVKNVSSQRTQKQKERIMLQRKKREVLARQKYALLPSSSSSSENDLSSESSSSSSTEGEEDLFVSPGENHQDGTTLPSGGMDEDVVVIEASSTPQVTANEEINVTSTDSEVEIVTVGETYRSRATLGHPRSHWGQNSQSGRTQEHRTRNRVSTIIQPLRQNTTEVVDLTVDEDDPTVVPTTSGRVESQPVSTVSSNTSTSEPASDSVSGLLGSRGCAVSETPAIPPNSNTVGTIADDSRTSTSGTNADGGPPAMPRLPSCCPQHSPCGGSSQNHVLGHPHSSCFQPHSHHFPHHHHHHHHHSSHPGVPLSPSFRDSHCPVERNAAVPPPCGATSGSGSTYHDPQALPVDLSNNGIRNHGSVSFHSTSAFDPCCPGSSSRSTVYGHQSTTSNAQTMAIDGYGSSMVAQAQPQTPSPLSSCRHYMHASYTSLTRPLHHQTSACPHSNPASQPPPPPPPPPMDYVIAHQVPFISPLPSLTSTHAVPPPPPSHHLSTAAAPLPQHLSTSHQSMSHHISATAPATQRLHAHEVIQRMEVQRRRMMQHPTRAHERPPPHPHRMHPNYGHGHHIHVPQTMSSHPRQGPERSAWEIAIETGVTAAPYQTGPLHTHLAHYHPPPRLHHLQIGALPLMVPDMAGYPHIRYISSGLDGRSFRVPFRGNFEELIHLEERLGNVNRGASQGTIERCTYPHKYKKVSTDWFSQRKLHSKQDGEEAPEEDTEEKCTICLSILEEGEDVRRLPCMHLFHQVCVDQWLITNKKCPICRVDIDTQLPTES</sequence>